<name>EFTU_LACE2</name>
<comment type="function">
    <text evidence="2">GTP hydrolase that promotes the GTP-dependent binding of aminoacyl-tRNA to the A-site of ribosomes during protein biosynthesis.</text>
</comment>
<comment type="catalytic activity">
    <reaction evidence="2">
        <text>GTP + H2O = GDP + phosphate + H(+)</text>
        <dbReference type="Rhea" id="RHEA:19669"/>
        <dbReference type="ChEBI" id="CHEBI:15377"/>
        <dbReference type="ChEBI" id="CHEBI:15378"/>
        <dbReference type="ChEBI" id="CHEBI:37565"/>
        <dbReference type="ChEBI" id="CHEBI:43474"/>
        <dbReference type="ChEBI" id="CHEBI:58189"/>
        <dbReference type="EC" id="3.6.5.3"/>
    </reaction>
    <physiologicalReaction direction="left-to-right" evidence="2">
        <dbReference type="Rhea" id="RHEA:19670"/>
    </physiologicalReaction>
</comment>
<comment type="subunit">
    <text evidence="2">Monomer.</text>
</comment>
<comment type="subcellular location">
    <subcellularLocation>
        <location evidence="2">Cytoplasm</location>
    </subcellularLocation>
</comment>
<comment type="similarity">
    <text evidence="2">Belongs to the TRAFAC class translation factor GTPase superfamily. Classic translation factor GTPase family. EF-Tu/EF-1A subfamily.</text>
</comment>
<feature type="chain" id="PRO_1000203008" description="Elongation factor Tu">
    <location>
        <begin position="1"/>
        <end position="397"/>
    </location>
</feature>
<feature type="domain" description="tr-type G">
    <location>
        <begin position="10"/>
        <end position="206"/>
    </location>
</feature>
<feature type="region of interest" description="G1" evidence="1">
    <location>
        <begin position="19"/>
        <end position="26"/>
    </location>
</feature>
<feature type="region of interest" description="G2" evidence="1">
    <location>
        <begin position="61"/>
        <end position="65"/>
    </location>
</feature>
<feature type="region of interest" description="G3" evidence="1">
    <location>
        <begin position="82"/>
        <end position="85"/>
    </location>
</feature>
<feature type="region of interest" description="G4" evidence="1">
    <location>
        <begin position="137"/>
        <end position="140"/>
    </location>
</feature>
<feature type="region of interest" description="G5" evidence="1">
    <location>
        <begin position="175"/>
        <end position="177"/>
    </location>
</feature>
<feature type="binding site" evidence="2">
    <location>
        <begin position="19"/>
        <end position="26"/>
    </location>
    <ligand>
        <name>GTP</name>
        <dbReference type="ChEBI" id="CHEBI:37565"/>
    </ligand>
</feature>
<feature type="binding site" evidence="2">
    <location>
        <position position="26"/>
    </location>
    <ligand>
        <name>Mg(2+)</name>
        <dbReference type="ChEBI" id="CHEBI:18420"/>
    </ligand>
</feature>
<feature type="binding site" evidence="2">
    <location>
        <begin position="82"/>
        <end position="86"/>
    </location>
    <ligand>
        <name>GTP</name>
        <dbReference type="ChEBI" id="CHEBI:37565"/>
    </ligand>
</feature>
<feature type="binding site" evidence="2">
    <location>
        <begin position="137"/>
        <end position="140"/>
    </location>
    <ligand>
        <name>GTP</name>
        <dbReference type="ChEBI" id="CHEBI:37565"/>
    </ligand>
</feature>
<evidence type="ECO:0000250" key="1"/>
<evidence type="ECO:0000255" key="2">
    <source>
        <dbReference type="HAMAP-Rule" id="MF_00118"/>
    </source>
</evidence>
<keyword id="KW-0963">Cytoplasm</keyword>
<keyword id="KW-0251">Elongation factor</keyword>
<keyword id="KW-0342">GTP-binding</keyword>
<keyword id="KW-0378">Hydrolase</keyword>
<keyword id="KW-0460">Magnesium</keyword>
<keyword id="KW-0479">Metal-binding</keyword>
<keyword id="KW-0547">Nucleotide-binding</keyword>
<keyword id="KW-0648">Protein biosynthesis</keyword>
<keyword id="KW-1185">Reference proteome</keyword>
<protein>
    <recommendedName>
        <fullName evidence="2">Elongation factor Tu</fullName>
        <shortName evidence="2">EF-Tu</shortName>
        <ecNumber evidence="2">3.6.5.3</ecNumber>
    </recommendedName>
</protein>
<proteinExistence type="inferred from homology"/>
<dbReference type="EC" id="3.6.5.3" evidence="2"/>
<dbReference type="EMBL" id="CP001104">
    <property type="protein sequence ID" value="ACR71324.1"/>
    <property type="molecule type" value="Genomic_DNA"/>
</dbReference>
<dbReference type="RefSeq" id="WP_012738561.1">
    <property type="nucleotide sequence ID" value="NC_012778.1"/>
</dbReference>
<dbReference type="SMR" id="C4Z2R9"/>
<dbReference type="STRING" id="515620.EUBELI_00288"/>
<dbReference type="GeneID" id="41355061"/>
<dbReference type="KEGG" id="eel:EUBELI_00288"/>
<dbReference type="eggNOG" id="COG0050">
    <property type="taxonomic scope" value="Bacteria"/>
</dbReference>
<dbReference type="HOGENOM" id="CLU_007265_0_1_9"/>
<dbReference type="Proteomes" id="UP000001476">
    <property type="component" value="Chromosome"/>
</dbReference>
<dbReference type="GO" id="GO:0005829">
    <property type="term" value="C:cytosol"/>
    <property type="evidence" value="ECO:0007669"/>
    <property type="project" value="TreeGrafter"/>
</dbReference>
<dbReference type="GO" id="GO:0005525">
    <property type="term" value="F:GTP binding"/>
    <property type="evidence" value="ECO:0007669"/>
    <property type="project" value="UniProtKB-UniRule"/>
</dbReference>
<dbReference type="GO" id="GO:0003924">
    <property type="term" value="F:GTPase activity"/>
    <property type="evidence" value="ECO:0007669"/>
    <property type="project" value="InterPro"/>
</dbReference>
<dbReference type="GO" id="GO:0003746">
    <property type="term" value="F:translation elongation factor activity"/>
    <property type="evidence" value="ECO:0007669"/>
    <property type="project" value="UniProtKB-UniRule"/>
</dbReference>
<dbReference type="CDD" id="cd01884">
    <property type="entry name" value="EF_Tu"/>
    <property type="match status" value="1"/>
</dbReference>
<dbReference type="CDD" id="cd03697">
    <property type="entry name" value="EFTU_II"/>
    <property type="match status" value="1"/>
</dbReference>
<dbReference type="CDD" id="cd03707">
    <property type="entry name" value="EFTU_III"/>
    <property type="match status" value="1"/>
</dbReference>
<dbReference type="FunFam" id="2.40.30.10:FF:000001">
    <property type="entry name" value="Elongation factor Tu"/>
    <property type="match status" value="1"/>
</dbReference>
<dbReference type="FunFam" id="3.40.50.300:FF:000003">
    <property type="entry name" value="Elongation factor Tu"/>
    <property type="match status" value="1"/>
</dbReference>
<dbReference type="Gene3D" id="3.40.50.300">
    <property type="entry name" value="P-loop containing nucleotide triphosphate hydrolases"/>
    <property type="match status" value="1"/>
</dbReference>
<dbReference type="Gene3D" id="2.40.30.10">
    <property type="entry name" value="Translation factors"/>
    <property type="match status" value="2"/>
</dbReference>
<dbReference type="HAMAP" id="MF_00118_B">
    <property type="entry name" value="EF_Tu_B"/>
    <property type="match status" value="1"/>
</dbReference>
<dbReference type="InterPro" id="IPR041709">
    <property type="entry name" value="EF-Tu_GTP-bd"/>
</dbReference>
<dbReference type="InterPro" id="IPR050055">
    <property type="entry name" value="EF-Tu_GTPase"/>
</dbReference>
<dbReference type="InterPro" id="IPR004161">
    <property type="entry name" value="EFTu-like_2"/>
</dbReference>
<dbReference type="InterPro" id="IPR033720">
    <property type="entry name" value="EFTU_2"/>
</dbReference>
<dbReference type="InterPro" id="IPR031157">
    <property type="entry name" value="G_TR_CS"/>
</dbReference>
<dbReference type="InterPro" id="IPR027417">
    <property type="entry name" value="P-loop_NTPase"/>
</dbReference>
<dbReference type="InterPro" id="IPR005225">
    <property type="entry name" value="Small_GTP-bd"/>
</dbReference>
<dbReference type="InterPro" id="IPR000795">
    <property type="entry name" value="T_Tr_GTP-bd_dom"/>
</dbReference>
<dbReference type="InterPro" id="IPR009000">
    <property type="entry name" value="Transl_B-barrel_sf"/>
</dbReference>
<dbReference type="InterPro" id="IPR009001">
    <property type="entry name" value="Transl_elong_EF1A/Init_IF2_C"/>
</dbReference>
<dbReference type="InterPro" id="IPR004541">
    <property type="entry name" value="Transl_elong_EFTu/EF1A_bac/org"/>
</dbReference>
<dbReference type="InterPro" id="IPR004160">
    <property type="entry name" value="Transl_elong_EFTu/EF1A_C"/>
</dbReference>
<dbReference type="NCBIfam" id="TIGR00485">
    <property type="entry name" value="EF-Tu"/>
    <property type="match status" value="1"/>
</dbReference>
<dbReference type="NCBIfam" id="NF000766">
    <property type="entry name" value="PRK00049.1"/>
    <property type="match status" value="1"/>
</dbReference>
<dbReference type="NCBIfam" id="NF009372">
    <property type="entry name" value="PRK12735.1"/>
    <property type="match status" value="1"/>
</dbReference>
<dbReference type="NCBIfam" id="NF009373">
    <property type="entry name" value="PRK12736.1"/>
    <property type="match status" value="1"/>
</dbReference>
<dbReference type="NCBIfam" id="TIGR00231">
    <property type="entry name" value="small_GTP"/>
    <property type="match status" value="1"/>
</dbReference>
<dbReference type="PANTHER" id="PTHR43721:SF22">
    <property type="entry name" value="ELONGATION FACTOR TU, MITOCHONDRIAL"/>
    <property type="match status" value="1"/>
</dbReference>
<dbReference type="PANTHER" id="PTHR43721">
    <property type="entry name" value="ELONGATION FACTOR TU-RELATED"/>
    <property type="match status" value="1"/>
</dbReference>
<dbReference type="Pfam" id="PF00009">
    <property type="entry name" value="GTP_EFTU"/>
    <property type="match status" value="1"/>
</dbReference>
<dbReference type="Pfam" id="PF03144">
    <property type="entry name" value="GTP_EFTU_D2"/>
    <property type="match status" value="1"/>
</dbReference>
<dbReference type="Pfam" id="PF03143">
    <property type="entry name" value="GTP_EFTU_D3"/>
    <property type="match status" value="1"/>
</dbReference>
<dbReference type="PRINTS" id="PR00315">
    <property type="entry name" value="ELONGATNFCT"/>
</dbReference>
<dbReference type="SUPFAM" id="SSF50465">
    <property type="entry name" value="EF-Tu/eEF-1alpha/eIF2-gamma C-terminal domain"/>
    <property type="match status" value="1"/>
</dbReference>
<dbReference type="SUPFAM" id="SSF52540">
    <property type="entry name" value="P-loop containing nucleoside triphosphate hydrolases"/>
    <property type="match status" value="1"/>
</dbReference>
<dbReference type="SUPFAM" id="SSF50447">
    <property type="entry name" value="Translation proteins"/>
    <property type="match status" value="1"/>
</dbReference>
<dbReference type="PROSITE" id="PS00301">
    <property type="entry name" value="G_TR_1"/>
    <property type="match status" value="1"/>
</dbReference>
<dbReference type="PROSITE" id="PS51722">
    <property type="entry name" value="G_TR_2"/>
    <property type="match status" value="1"/>
</dbReference>
<gene>
    <name evidence="2" type="primary">tuf</name>
    <name type="ordered locus">EUBELI_00288</name>
</gene>
<sequence>MAKAKFERTKPHCNIGTIGHVDHGKTTLTAAITKTLHERLGTGEAVAFENIDKAPEERERGITISTAHVEYETEKRHYAHVDCPGHADYVKNMITGAAQMDAGILVVAATDGVMAQTREHILLARQVGVPYIVVFMNKCDMVDDPELLELVDMEIRELLNEYGFPGDDTPIIQGSALKALEDPNSEWGDKILELMHTIDEYVPDPERDTDKPFLMPVEDVFSITGRGTVATGRVERGVLHVNEEVEIVGIHEDIRKVVVTGIEMFRKLLDEAQPGDNIGALLRGVQRDEIQRGQVLCKPGSITPHHKFTAQVYVLTKDEGGRHTPFFNNYRPQFYFRTTDVTGVCELPAGTEMCMPGDNVEMTVELIHNVAMEQGLRFAIREGGRTVGSGAVATIIE</sequence>
<reference key="1">
    <citation type="journal article" date="2009" name="Proc. Natl. Acad. Sci. U.S.A.">
        <title>Characterizing a model human gut microbiota composed of members of its two dominant bacterial phyla.</title>
        <authorList>
            <person name="Mahowald M.A."/>
            <person name="Rey F.E."/>
            <person name="Seedorf H."/>
            <person name="Turnbaugh P.J."/>
            <person name="Fulton R.S."/>
            <person name="Wollam A."/>
            <person name="Shah N."/>
            <person name="Wang C."/>
            <person name="Magrini V."/>
            <person name="Wilson R.K."/>
            <person name="Cantarel B.L."/>
            <person name="Coutinho P.M."/>
            <person name="Henrissat B."/>
            <person name="Crock L.W."/>
            <person name="Russell A."/>
            <person name="Verberkmoes N.C."/>
            <person name="Hettich R.L."/>
            <person name="Gordon J.I."/>
        </authorList>
    </citation>
    <scope>NUCLEOTIDE SEQUENCE [LARGE SCALE GENOMIC DNA]</scope>
    <source>
        <strain>ATCC 27750 / DSM 3376 / VPI C15-48 / C15-B4</strain>
    </source>
</reference>
<organism>
    <name type="scientific">Lachnospira eligens (strain ATCC 27750 / DSM 3376 / VPI C15-48 / C15-B4)</name>
    <name type="common">Eubacterium eligens</name>
    <dbReference type="NCBI Taxonomy" id="515620"/>
    <lineage>
        <taxon>Bacteria</taxon>
        <taxon>Bacillati</taxon>
        <taxon>Bacillota</taxon>
        <taxon>Clostridia</taxon>
        <taxon>Lachnospirales</taxon>
        <taxon>Lachnospiraceae</taxon>
        <taxon>Lachnospira</taxon>
    </lineage>
</organism>
<accession>C4Z2R9</accession>